<keyword id="KW-1015">Disulfide bond</keyword>
<keyword id="KW-0274">FAD</keyword>
<keyword id="KW-0285">Flavoprotein</keyword>
<keyword id="KW-0349">Heme</keyword>
<keyword id="KW-0408">Iron</keyword>
<keyword id="KW-0479">Metal-binding</keyword>
<keyword id="KW-0500">Molybdenum</keyword>
<keyword id="KW-0520">NAD</keyword>
<keyword id="KW-0534">Nitrate assimilation</keyword>
<keyword id="KW-0560">Oxidoreductase</keyword>
<keyword id="KW-1185">Reference proteome</keyword>
<comment type="function">
    <text>Nitrate reductase is a key enzyme involved in the first step of nitrate assimilation in plants, fungi and bacteria.</text>
</comment>
<comment type="catalytic activity">
    <reaction>
        <text>nitrite + NAD(+) + H2O = nitrate + NADH + H(+)</text>
        <dbReference type="Rhea" id="RHEA:17913"/>
        <dbReference type="ChEBI" id="CHEBI:15377"/>
        <dbReference type="ChEBI" id="CHEBI:15378"/>
        <dbReference type="ChEBI" id="CHEBI:16301"/>
        <dbReference type="ChEBI" id="CHEBI:17632"/>
        <dbReference type="ChEBI" id="CHEBI:57540"/>
        <dbReference type="ChEBI" id="CHEBI:57945"/>
        <dbReference type="EC" id="1.7.1.1"/>
    </reaction>
</comment>
<comment type="cofactor">
    <cofactor evidence="1">
        <name>FAD</name>
        <dbReference type="ChEBI" id="CHEBI:57692"/>
    </cofactor>
    <text evidence="1">Binds 1 FAD per subunit.</text>
</comment>
<comment type="cofactor">
    <cofactor evidence="1">
        <name>heme</name>
        <dbReference type="ChEBI" id="CHEBI:30413"/>
    </cofactor>
    <text evidence="1">Binds 1 heme group per subunit.</text>
</comment>
<comment type="cofactor">
    <cofactor evidence="1">
        <name>Mo-molybdopterin</name>
        <dbReference type="ChEBI" id="CHEBI:71302"/>
    </cofactor>
    <text evidence="1">Binds 1 Mo-molybdopterin (Mo-MPT) cofactor per subunit.</text>
</comment>
<comment type="activity regulation">
    <text>Regulated by the nitrogen source and controlled by the circadian rhythm.</text>
</comment>
<comment type="subunit">
    <text>Homodimer.</text>
</comment>
<comment type="similarity">
    <text evidence="9">Belongs to the nitrate reductase family.</text>
</comment>
<reference key="1">
    <citation type="journal article" date="1989" name="Plant Mol. Biol.">
        <title>Complete nucleotide sequence of the two homeologous tobacco nitrate reductase genes.</title>
        <authorList>
            <person name="Vaucheret H."/>
            <person name="Kronenberger J."/>
            <person name="Rouze P."/>
            <person name="Caboche M."/>
        </authorList>
    </citation>
    <scope>NUCLEOTIDE SEQUENCE [GENOMIC DNA]</scope>
    <source>
        <strain>cv. Xanthi</strain>
        <tissue>Leaf</tissue>
    </source>
</reference>
<accession>P11605</accession>
<evidence type="ECO:0000250" key="1"/>
<evidence type="ECO:0000250" key="2">
    <source>
        <dbReference type="UniProtKB" id="A0A286R227"/>
    </source>
</evidence>
<evidence type="ECO:0000250" key="3">
    <source>
        <dbReference type="UniProtKB" id="P17571"/>
    </source>
</evidence>
<evidence type="ECO:0000250" key="4">
    <source>
        <dbReference type="UniProtKB" id="P49050"/>
    </source>
</evidence>
<evidence type="ECO:0000255" key="5"/>
<evidence type="ECO:0000255" key="6">
    <source>
        <dbReference type="PROSITE-ProRule" id="PRU00279"/>
    </source>
</evidence>
<evidence type="ECO:0000255" key="7">
    <source>
        <dbReference type="PROSITE-ProRule" id="PRU00716"/>
    </source>
</evidence>
<evidence type="ECO:0000256" key="8">
    <source>
        <dbReference type="SAM" id="MobiDB-lite"/>
    </source>
</evidence>
<evidence type="ECO:0000305" key="9"/>
<name>NIA1_TOBAC</name>
<dbReference type="EC" id="1.7.1.1"/>
<dbReference type="EMBL" id="X14058">
    <property type="protein sequence ID" value="CAA32216.1"/>
    <property type="molecule type" value="Genomic_DNA"/>
</dbReference>
<dbReference type="PIR" id="S04838">
    <property type="entry name" value="RDNTNT"/>
</dbReference>
<dbReference type="SMR" id="P11605"/>
<dbReference type="STRING" id="4097.P11605"/>
<dbReference type="PaxDb" id="4097-P11605"/>
<dbReference type="Proteomes" id="UP000084051">
    <property type="component" value="Unplaced"/>
</dbReference>
<dbReference type="GO" id="GO:0071949">
    <property type="term" value="F:FAD binding"/>
    <property type="evidence" value="ECO:0000250"/>
    <property type="project" value="UniProtKB"/>
</dbReference>
<dbReference type="GO" id="GO:0020037">
    <property type="term" value="F:heme binding"/>
    <property type="evidence" value="ECO:0007669"/>
    <property type="project" value="InterPro"/>
</dbReference>
<dbReference type="GO" id="GO:0030151">
    <property type="term" value="F:molybdenum ion binding"/>
    <property type="evidence" value="ECO:0000250"/>
    <property type="project" value="UniProtKB"/>
</dbReference>
<dbReference type="GO" id="GO:0043546">
    <property type="term" value="F:molybdopterin cofactor binding"/>
    <property type="evidence" value="ECO:0007669"/>
    <property type="project" value="InterPro"/>
</dbReference>
<dbReference type="GO" id="GO:0009703">
    <property type="term" value="F:nitrate reductase (NADH) activity"/>
    <property type="evidence" value="ECO:0000318"/>
    <property type="project" value="GO_Central"/>
</dbReference>
<dbReference type="GO" id="GO:0050464">
    <property type="term" value="F:nitrate reductase (NADPH) activity"/>
    <property type="evidence" value="ECO:0007669"/>
    <property type="project" value="InterPro"/>
</dbReference>
<dbReference type="GO" id="GO:0042128">
    <property type="term" value="P:nitrate assimilation"/>
    <property type="evidence" value="ECO:0000318"/>
    <property type="project" value="GO_Central"/>
</dbReference>
<dbReference type="GO" id="GO:0006809">
    <property type="term" value="P:nitric oxide biosynthetic process"/>
    <property type="evidence" value="ECO:0000318"/>
    <property type="project" value="GO_Central"/>
</dbReference>
<dbReference type="CDD" id="cd06183">
    <property type="entry name" value="cyt_b5_reduct_like"/>
    <property type="match status" value="1"/>
</dbReference>
<dbReference type="CDD" id="cd02112">
    <property type="entry name" value="eukary_NR_Moco"/>
    <property type="match status" value="1"/>
</dbReference>
<dbReference type="FunFam" id="2.40.30.10:FF:000021">
    <property type="entry name" value="NADH-cytochrome b5 reductase"/>
    <property type="match status" value="1"/>
</dbReference>
<dbReference type="FunFam" id="2.60.40.650:FF:000001">
    <property type="entry name" value="Nitrate reductase"/>
    <property type="match status" value="1"/>
</dbReference>
<dbReference type="FunFam" id="3.10.120.10:FF:000008">
    <property type="entry name" value="Nitrate reductase"/>
    <property type="match status" value="1"/>
</dbReference>
<dbReference type="FunFam" id="3.90.420.10:FF:000003">
    <property type="entry name" value="Nitrate reductase"/>
    <property type="match status" value="1"/>
</dbReference>
<dbReference type="FunFam" id="3.40.50.80:FF:000025">
    <property type="entry name" value="Nitrate reductase [NADH]"/>
    <property type="match status" value="1"/>
</dbReference>
<dbReference type="Gene3D" id="2.60.40.650">
    <property type="match status" value="1"/>
</dbReference>
<dbReference type="Gene3D" id="3.10.120.10">
    <property type="entry name" value="Cytochrome b5-like heme/steroid binding domain"/>
    <property type="match status" value="1"/>
</dbReference>
<dbReference type="Gene3D" id="3.40.50.80">
    <property type="entry name" value="Nucleotide-binding domain of ferredoxin-NADP reductase (FNR) module"/>
    <property type="match status" value="1"/>
</dbReference>
<dbReference type="Gene3D" id="3.90.420.10">
    <property type="entry name" value="Oxidoreductase, molybdopterin-binding domain"/>
    <property type="match status" value="1"/>
</dbReference>
<dbReference type="Gene3D" id="2.40.30.10">
    <property type="entry name" value="Translation factors"/>
    <property type="match status" value="1"/>
</dbReference>
<dbReference type="InterPro" id="IPR008333">
    <property type="entry name" value="Cbr1-like_FAD-bd_dom"/>
</dbReference>
<dbReference type="InterPro" id="IPR001199">
    <property type="entry name" value="Cyt_B5-like_heme/steroid-bd"/>
</dbReference>
<dbReference type="InterPro" id="IPR036400">
    <property type="entry name" value="Cyt_B5-like_heme/steroid_sf"/>
</dbReference>
<dbReference type="InterPro" id="IPR018506">
    <property type="entry name" value="Cyt_B5_heme-BS"/>
</dbReference>
<dbReference type="InterPro" id="IPR017927">
    <property type="entry name" value="FAD-bd_FR_type"/>
</dbReference>
<dbReference type="InterPro" id="IPR001709">
    <property type="entry name" value="Flavoprot_Pyr_Nucl_cyt_Rdtase"/>
</dbReference>
<dbReference type="InterPro" id="IPR039261">
    <property type="entry name" value="FNR_nucleotide-bd"/>
</dbReference>
<dbReference type="InterPro" id="IPR014756">
    <property type="entry name" value="Ig_E-set"/>
</dbReference>
<dbReference type="InterPro" id="IPR005066">
    <property type="entry name" value="MoCF_OxRdtse_dimer"/>
</dbReference>
<dbReference type="InterPro" id="IPR008335">
    <property type="entry name" value="Mopterin_OxRdtase_euk"/>
</dbReference>
<dbReference type="InterPro" id="IPR012137">
    <property type="entry name" value="Nitr_rd_NADH"/>
</dbReference>
<dbReference type="InterPro" id="IPR001433">
    <property type="entry name" value="OxRdtase_FAD/NAD-bd"/>
</dbReference>
<dbReference type="InterPro" id="IPR000572">
    <property type="entry name" value="OxRdtase_Mopterin-bd_dom"/>
</dbReference>
<dbReference type="InterPro" id="IPR036374">
    <property type="entry name" value="OxRdtase_Mopterin-bd_sf"/>
</dbReference>
<dbReference type="InterPro" id="IPR022407">
    <property type="entry name" value="OxRdtase_Mopterin_BS"/>
</dbReference>
<dbReference type="InterPro" id="IPR017938">
    <property type="entry name" value="Riboflavin_synthase-like_b-brl"/>
</dbReference>
<dbReference type="PANTHER" id="PTHR19372:SF7">
    <property type="entry name" value="SULFITE OXIDASE, MITOCHONDRIAL"/>
    <property type="match status" value="1"/>
</dbReference>
<dbReference type="PANTHER" id="PTHR19372">
    <property type="entry name" value="SULFITE REDUCTASE"/>
    <property type="match status" value="1"/>
</dbReference>
<dbReference type="Pfam" id="PF00173">
    <property type="entry name" value="Cyt-b5"/>
    <property type="match status" value="1"/>
</dbReference>
<dbReference type="Pfam" id="PF00970">
    <property type="entry name" value="FAD_binding_6"/>
    <property type="match status" value="1"/>
</dbReference>
<dbReference type="Pfam" id="PF03404">
    <property type="entry name" value="Mo-co_dimer"/>
    <property type="match status" value="1"/>
</dbReference>
<dbReference type="Pfam" id="PF00175">
    <property type="entry name" value="NAD_binding_1"/>
    <property type="match status" value="1"/>
</dbReference>
<dbReference type="Pfam" id="PF00174">
    <property type="entry name" value="Oxidored_molyb"/>
    <property type="match status" value="1"/>
</dbReference>
<dbReference type="PIRSF" id="PIRSF000233">
    <property type="entry name" value="Nitr_rd_NADH"/>
    <property type="match status" value="1"/>
</dbReference>
<dbReference type="PRINTS" id="PR00406">
    <property type="entry name" value="CYTB5RDTASE"/>
</dbReference>
<dbReference type="PRINTS" id="PR00363">
    <property type="entry name" value="CYTOCHROMEB5"/>
</dbReference>
<dbReference type="PRINTS" id="PR00407">
    <property type="entry name" value="EUMOPTERIN"/>
</dbReference>
<dbReference type="PRINTS" id="PR00371">
    <property type="entry name" value="FPNCR"/>
</dbReference>
<dbReference type="SMART" id="SM01117">
    <property type="entry name" value="Cyt-b5"/>
    <property type="match status" value="1"/>
</dbReference>
<dbReference type="SUPFAM" id="SSF55856">
    <property type="entry name" value="Cytochrome b5-like heme/steroid binding domain"/>
    <property type="match status" value="1"/>
</dbReference>
<dbReference type="SUPFAM" id="SSF81296">
    <property type="entry name" value="E set domains"/>
    <property type="match status" value="1"/>
</dbReference>
<dbReference type="SUPFAM" id="SSF52343">
    <property type="entry name" value="Ferredoxin reductase-like, C-terminal NADP-linked domain"/>
    <property type="match status" value="1"/>
</dbReference>
<dbReference type="SUPFAM" id="SSF56524">
    <property type="entry name" value="Oxidoreductase molybdopterin-binding domain"/>
    <property type="match status" value="1"/>
</dbReference>
<dbReference type="SUPFAM" id="SSF63380">
    <property type="entry name" value="Riboflavin synthase domain-like"/>
    <property type="match status" value="1"/>
</dbReference>
<dbReference type="PROSITE" id="PS00191">
    <property type="entry name" value="CYTOCHROME_B5_1"/>
    <property type="match status" value="1"/>
</dbReference>
<dbReference type="PROSITE" id="PS50255">
    <property type="entry name" value="CYTOCHROME_B5_2"/>
    <property type="match status" value="1"/>
</dbReference>
<dbReference type="PROSITE" id="PS51384">
    <property type="entry name" value="FAD_FR"/>
    <property type="match status" value="1"/>
</dbReference>
<dbReference type="PROSITE" id="PS00559">
    <property type="entry name" value="MOLYBDOPTERIN_EUK"/>
    <property type="match status" value="1"/>
</dbReference>
<sequence>MAASVENRQFSHIEAGLSRSFKPRSDSPVRGCNFPPPNSTNFQKKPNSTIFLDYSSSEDDDDDDEKNEYLQMIKKGNSELEPSVHDSRDEGTADNWIERNFSLIRLTGKHPFNSEPPLNRLMHHGFITPVPLHYVRNHGPVPKGTWDDWTVEVTGLVKRPMKFTMDQLVNEFPSRELPVTLVCAGNRRKEQNMVKQTIGFNWGAAAVSTTVWRGVPLRALLKRYGVFSKNKGALNVCFEGADVLPGGGGSKYGTSIKKEFAMDPARDIIIAYMQNGEKLAPDHGFPVRMIIPGFIGGRMVKWIKRIIVTTQESDSYYHFKDNRVLPPHVDAELANTEAWWYKPEYIINELNINSVITTPCHEEILPINAWTTQRPYTLRGYSYSGGGKKVTRVEVTLDGGETWQVCTLDHPEKPTKYGKYWCWCFWSLEVEVLDLLSAKEIAVRAWDETLNTQPEKLIWNVMGMMNNCWFRVKMNVCKPHKGEIGIVFEHPTQPGNQSGGWMAKERHLEISAEAPPTLKKSISTPFMNTASKMYSMSEVRKHSSADSAWIIVHGHIYDATRFLKDHPGGSDSILINAGTDCTEEFDAIHSDKAKKLLEEFRIGELLTTGYTSDSPGNSVHGSSSFSSFLAPIKELVPAQRSVALIPREKIPCKLIDKQSISPDVRKFRFALPSEDQVLGLPVGKHIFLCAVIDDKLCMRAYTPTSTIDEVGYFELVVKIYFKGIHPKFPNGGQMSQYLDSLQLGSFLDVKGPLGHIEYQGKGNFLVHGKQKFAKKLAMIAGGTGITPVYQVMQAILKDPEDDTEMYVVYANRTEDDILLKEELDSWAEKIPERVKVWYVVQDSIKEGWKYSLGFISEAILREHIPEPSHTTLALACGPPPMIQFAVNPNLEKMGYDIKDSLLVF</sequence>
<organism>
    <name type="scientific">Nicotiana tabacum</name>
    <name type="common">Common tobacco</name>
    <dbReference type="NCBI Taxonomy" id="4097"/>
    <lineage>
        <taxon>Eukaryota</taxon>
        <taxon>Viridiplantae</taxon>
        <taxon>Streptophyta</taxon>
        <taxon>Embryophyta</taxon>
        <taxon>Tracheophyta</taxon>
        <taxon>Spermatophyta</taxon>
        <taxon>Magnoliopsida</taxon>
        <taxon>eudicotyledons</taxon>
        <taxon>Gunneridae</taxon>
        <taxon>Pentapetalae</taxon>
        <taxon>asterids</taxon>
        <taxon>lamiids</taxon>
        <taxon>Solanales</taxon>
        <taxon>Solanaceae</taxon>
        <taxon>Nicotianoideae</taxon>
        <taxon>Nicotianeae</taxon>
        <taxon>Nicotiana</taxon>
    </lineage>
</organism>
<protein>
    <recommendedName>
        <fullName>Nitrate reductase [NADH] 1</fullName>
        <shortName>NR1</shortName>
        <ecNumber>1.7.1.1</ecNumber>
    </recommendedName>
</protein>
<gene>
    <name type="primary">NIA1</name>
</gene>
<feature type="chain" id="PRO_0000166072" description="Nitrate reductase [NADH] 1">
    <location>
        <begin position="1"/>
        <end position="904"/>
    </location>
</feature>
<feature type="domain" description="Cytochrome b5 heme-binding" evidence="6">
    <location>
        <begin position="531"/>
        <end position="606"/>
    </location>
</feature>
<feature type="domain" description="FAD-binding FR-type" evidence="7">
    <location>
        <begin position="647"/>
        <end position="759"/>
    </location>
</feature>
<feature type="region of interest" description="Disordered" evidence="8">
    <location>
        <begin position="1"/>
        <end position="65"/>
    </location>
</feature>
<feature type="compositionally biased region" description="Polar residues" evidence="8">
    <location>
        <begin position="1"/>
        <end position="10"/>
    </location>
</feature>
<feature type="compositionally biased region" description="Polar residues" evidence="8">
    <location>
        <begin position="39"/>
        <end position="50"/>
    </location>
</feature>
<feature type="compositionally biased region" description="Acidic residues" evidence="8">
    <location>
        <begin position="56"/>
        <end position="65"/>
    </location>
</feature>
<feature type="binding site" evidence="4">
    <location>
        <position position="183"/>
    </location>
    <ligand>
        <name>Mo-molybdopterin</name>
        <dbReference type="ChEBI" id="CHEBI:71302"/>
    </ligand>
    <ligandPart>
        <name>Mo</name>
        <dbReference type="ChEBI" id="CHEBI:28685"/>
    </ligandPart>
</feature>
<feature type="binding site" description="axial binding residue" evidence="6">
    <location>
        <position position="566"/>
    </location>
    <ligand>
        <name>heme</name>
        <dbReference type="ChEBI" id="CHEBI:30413"/>
    </ligand>
    <ligandPart>
        <name>Fe</name>
        <dbReference type="ChEBI" id="CHEBI:18248"/>
    </ligandPart>
</feature>
<feature type="binding site" description="axial binding residue" evidence="6">
    <location>
        <position position="589"/>
    </location>
    <ligand>
        <name>heme</name>
        <dbReference type="ChEBI" id="CHEBI:30413"/>
    </ligand>
    <ligandPart>
        <name>Fe</name>
        <dbReference type="ChEBI" id="CHEBI:18248"/>
    </ligandPart>
</feature>
<feature type="binding site" evidence="2">
    <location>
        <begin position="699"/>
        <end position="702"/>
    </location>
    <ligand>
        <name>FAD</name>
        <dbReference type="ChEBI" id="CHEBI:57692"/>
    </ligand>
</feature>
<feature type="binding site" evidence="2">
    <location>
        <begin position="716"/>
        <end position="720"/>
    </location>
    <ligand>
        <name>FAD</name>
        <dbReference type="ChEBI" id="CHEBI:57692"/>
    </ligand>
</feature>
<feature type="binding site" evidence="3">
    <location>
        <position position="721"/>
    </location>
    <ligand>
        <name>FAD</name>
        <dbReference type="ChEBI" id="CHEBI:57692"/>
    </ligand>
</feature>
<feature type="binding site" evidence="2">
    <location>
        <position position="728"/>
    </location>
    <ligand>
        <name>FAD</name>
        <dbReference type="ChEBI" id="CHEBI:57692"/>
    </ligand>
</feature>
<feature type="binding site" evidence="2">
    <location>
        <begin position="733"/>
        <end position="735"/>
    </location>
    <ligand>
        <name>FAD</name>
        <dbReference type="ChEBI" id="CHEBI:57692"/>
    </ligand>
</feature>
<feature type="binding site" evidence="2">
    <location>
        <position position="786"/>
    </location>
    <ligand>
        <name>FAD</name>
        <dbReference type="ChEBI" id="CHEBI:57692"/>
    </ligand>
</feature>
<feature type="disulfide bond" description="Interchain" evidence="5">
    <location>
        <position position="422"/>
    </location>
</feature>
<proteinExistence type="inferred from homology"/>